<organism>
    <name type="scientific">Rice ragged stunt virus (isolate Thailand)</name>
    <name type="common">RRSV</name>
    <dbReference type="NCBI Taxonomy" id="649603"/>
    <lineage>
        <taxon>Viruses</taxon>
        <taxon>Riboviria</taxon>
        <taxon>Orthornavirae</taxon>
        <taxon>Duplornaviricota</taxon>
        <taxon>Resentoviricetes</taxon>
        <taxon>Reovirales</taxon>
        <taxon>Spinareoviridae</taxon>
        <taxon>Oryzavirus</taxon>
        <taxon>Rice ragged stunt virus</taxon>
    </lineage>
</organism>
<accession>O56044</accession>
<feature type="chain" id="PRO_0000403631" description="Inner capsid protein VP3">
    <location>
        <begin position="1"/>
        <end position="1173"/>
    </location>
</feature>
<feature type="region of interest" description="Disordered" evidence="2">
    <location>
        <begin position="1"/>
        <end position="53"/>
    </location>
</feature>
<feature type="compositionally biased region" description="Basic and acidic residues" evidence="2">
    <location>
        <begin position="9"/>
        <end position="21"/>
    </location>
</feature>
<feature type="compositionally biased region" description="Polar residues" evidence="2">
    <location>
        <begin position="33"/>
        <end position="53"/>
    </location>
</feature>
<sequence>MSNLPKPASHFEPEKNVDDKGNVTGSAPPVSKDTPTQQASVSLPNQEEPTQQTLVTTELPTKPDYNDLLLKASDERLLLVKEAKPQTLRFYASPTGLTASGFSIVTSPTSSYEQHAIDIFPYNCPVDKIVPAFTLEQIKITNDVLSSAQQSYLSRIPHDTSLVKLNEIEVVTGGSRDLFSLGTGYVMVVPNAEFFEGANLKFVYGVPMADIIFSKLTSQSAADYAFLDRSRIASGFIMFALHFALRTNVNLVVTKDNSARFASELSYSRPMSFVQGKKIVLPVQPHVCFAEGNSLMRYLDTALEGKYTQGVTYKYGRERIITETKEGGPITEITYLNIDNVTAQALGITAHVIGIDRYREDNVKRALLAYSLSGSTVDLMQSDESERMFGRMLSPQQELSYLLVGAALSQDVYKTILRANLDAFMMFGTVMPSLSDSLAKIPADAGNQQIISLIRERQSVSGFENAMEYLAMQVTPPLIWPCVISREVNVTGLSLLIMLLEYILFFIFYPSLAKKCGAGLCNNFYKLVFALSNSEWSQFVTRVGYDGTLGNSIPITDEDYWSNARRPALFTTDLSQFRLLGLIQRLIAPIGEHREHVKAQAAEFPRLKARTEYWNPYPNPGAQHVEQTIFKARLLQAFDETLTLVKDLNQTGQLVSKTLMAGVAKVFNTCKIKLRYHGVGFGRDIGMPLAYLRDRKINFYHDYDGRLDTPFPNQMMLVSASQSPHDHKIPIELRRKGQIVLETGVVWTLVLGLQFPSHQFDEDMTNDPICKFRAPSPGEELGKDDTIIAMCANACVPFSIAAGIISESYADGGMKEIKELLSGSLSSTEFRNLISCIQTAMQGSGFNVGRNRDVFRQNETVDLRFIEPKVRYVENELTIIAPTPQDPPIIRGDLQLIPEGLMPRFRLGLTAIADSSSEYSRLRKGLYLARCEVDVEAPNNALPLDLRDYVEVEYSHDLFQVRRIQTKQALGIFYQGEFYYRPALVPKMLIVVNTSEEMEPSYQEFFMQCLEERRIVIKLPKMYFLSRIVCTHSIQRPDERDAVLGLLAVRNDQIPLVTFYDTEQVDPTIQFDGLASGSKSKFIWPISSIDQNVVVRALGASGSTAPIGFAAPTDSMCDSGSIDDVGNLTTGAGVLKDPRVISLTNGVINYTERANLTGRVLYRYRPAYALDSY</sequence>
<reference key="1">
    <citation type="submission" date="1997-08" db="EMBL/GenBank/DDBJ databases">
        <title>Rice ragged stunt oryzavirus:complete sequence and genome organization.</title>
        <authorList>
            <person name="Upadhyaya N.M."/>
            <person name="Li Z."/>
            <person name="Ramm K."/>
            <person name="Yang M."/>
            <person name="Gellatly J.A."/>
            <person name="Kositratana W."/>
            <person name="Gerlach W.L."/>
            <person name="Waterhouse P.M."/>
        </authorList>
    </citation>
    <scope>NUCLEOTIDE SEQUENCE [GENOMIC RNA]</scope>
</reference>
<organismHost>
    <name type="scientific">Oryza latifolia</name>
    <dbReference type="NCBI Taxonomy" id="4534"/>
</organismHost>
<organismHost>
    <name type="scientific">Oryza nivara</name>
    <name type="common">Indian wild rice</name>
    <name type="synonym">Oryza sativa f. spontanea</name>
    <dbReference type="NCBI Taxonomy" id="4536"/>
</organismHost>
<organismHost>
    <name type="scientific">Oryza rufipogon</name>
    <name type="common">Brownbeard rice</name>
    <name type="synonym">Asian wild rice</name>
    <dbReference type="NCBI Taxonomy" id="4529"/>
</organismHost>
<proteinExistence type="inferred from homology"/>
<comment type="function">
    <text evidence="1">Inner capsid protein that self-assembles to form an icosahedral capsid with a T=2 symmetry, which consists of 120 copies of VP2, with channels at each of its five-fold vertices. This capsid constitutes the innermost concentric layer of the viral mature particle.</text>
</comment>
<comment type="subunit">
    <text evidence="1">Homodecamer; each decamer is made up of two conformers of VP2, called VP2A and VP2B. 12 homodecamers assemble to form an icosahedral capsid.</text>
</comment>
<comment type="subcellular location">
    <subcellularLocation>
        <location evidence="1">Virion</location>
    </subcellularLocation>
    <text evidence="1">Found in the inner capsid (120 copies).</text>
</comment>
<comment type="similarity">
    <text evidence="3">Belongs to the turreted BTV-fold inner capsid family.</text>
</comment>
<protein>
    <recommendedName>
        <fullName>Inner capsid protein VP3</fullName>
    </recommendedName>
    <alternativeName>
        <fullName>Major core capsid protein VP3</fullName>
    </alternativeName>
</protein>
<dbReference type="EMBL" id="AF020336">
    <property type="protein sequence ID" value="AAC04674.1"/>
    <property type="molecule type" value="Genomic_RNA"/>
</dbReference>
<dbReference type="PIR" id="T08610">
    <property type="entry name" value="T08610"/>
</dbReference>
<dbReference type="RefSeq" id="NP_620516.1">
    <property type="nucleotide sequence ID" value="NC_003751.1"/>
</dbReference>
<dbReference type="SMR" id="O56044"/>
<dbReference type="GeneID" id="991197"/>
<dbReference type="KEGG" id="vg:991197"/>
<dbReference type="Proteomes" id="UP000000348">
    <property type="component" value="Genome"/>
</dbReference>
<dbReference type="GO" id="GO:0039616">
    <property type="term" value="C:T=2 icosahedral viral capsid"/>
    <property type="evidence" value="ECO:0007669"/>
    <property type="project" value="UniProtKB-KW"/>
</dbReference>
<dbReference type="GO" id="GO:0039625">
    <property type="term" value="C:viral inner capsid"/>
    <property type="evidence" value="ECO:0007669"/>
    <property type="project" value="UniProtKB-KW"/>
</dbReference>
<dbReference type="InterPro" id="IPR049422">
    <property type="entry name" value="VP1/VP3_C"/>
</dbReference>
<dbReference type="Pfam" id="PF21416">
    <property type="entry name" value="VP1-like_C"/>
    <property type="match status" value="1"/>
</dbReference>
<name>CAPSD_RRSVT</name>
<keyword id="KW-0167">Capsid protein</keyword>
<keyword id="KW-1153">Inner capsid protein</keyword>
<keyword id="KW-1185">Reference proteome</keyword>
<keyword id="KW-1141">T=2 icosahedral capsid protein</keyword>
<keyword id="KW-0946">Virion</keyword>
<evidence type="ECO:0000250" key="1">
    <source>
        <dbReference type="UniProtKB" id="P15024"/>
    </source>
</evidence>
<evidence type="ECO:0000256" key="2">
    <source>
        <dbReference type="SAM" id="MobiDB-lite"/>
    </source>
</evidence>
<evidence type="ECO:0000305" key="3"/>